<dbReference type="EC" id="2.8.1.4" evidence="1"/>
<dbReference type="EMBL" id="CP000826">
    <property type="protein sequence ID" value="ABV40185.1"/>
    <property type="molecule type" value="Genomic_DNA"/>
</dbReference>
<dbReference type="SMR" id="A8GAP5"/>
<dbReference type="STRING" id="399741.Spro_1081"/>
<dbReference type="KEGG" id="spe:Spro_1081"/>
<dbReference type="eggNOG" id="COG0301">
    <property type="taxonomic scope" value="Bacteria"/>
</dbReference>
<dbReference type="eggNOG" id="COG0607">
    <property type="taxonomic scope" value="Bacteria"/>
</dbReference>
<dbReference type="HOGENOM" id="CLU_037952_4_1_6"/>
<dbReference type="OrthoDB" id="9773948at2"/>
<dbReference type="UniPathway" id="UPA00060"/>
<dbReference type="GO" id="GO:0005829">
    <property type="term" value="C:cytosol"/>
    <property type="evidence" value="ECO:0007669"/>
    <property type="project" value="TreeGrafter"/>
</dbReference>
<dbReference type="GO" id="GO:0005524">
    <property type="term" value="F:ATP binding"/>
    <property type="evidence" value="ECO:0007669"/>
    <property type="project" value="UniProtKB-UniRule"/>
</dbReference>
<dbReference type="GO" id="GO:0004810">
    <property type="term" value="F:CCA tRNA nucleotidyltransferase activity"/>
    <property type="evidence" value="ECO:0007669"/>
    <property type="project" value="InterPro"/>
</dbReference>
<dbReference type="GO" id="GO:0000049">
    <property type="term" value="F:tRNA binding"/>
    <property type="evidence" value="ECO:0007669"/>
    <property type="project" value="UniProtKB-UniRule"/>
</dbReference>
<dbReference type="GO" id="GO:0140741">
    <property type="term" value="F:tRNA-uracil-4 sulfurtransferase activity"/>
    <property type="evidence" value="ECO:0007669"/>
    <property type="project" value="UniProtKB-EC"/>
</dbReference>
<dbReference type="GO" id="GO:0009228">
    <property type="term" value="P:thiamine biosynthetic process"/>
    <property type="evidence" value="ECO:0007669"/>
    <property type="project" value="UniProtKB-KW"/>
</dbReference>
<dbReference type="GO" id="GO:0009229">
    <property type="term" value="P:thiamine diphosphate biosynthetic process"/>
    <property type="evidence" value="ECO:0007669"/>
    <property type="project" value="UniProtKB-UniRule"/>
</dbReference>
<dbReference type="GO" id="GO:0052837">
    <property type="term" value="P:thiazole biosynthetic process"/>
    <property type="evidence" value="ECO:0007669"/>
    <property type="project" value="InterPro"/>
</dbReference>
<dbReference type="GO" id="GO:0002937">
    <property type="term" value="P:tRNA 4-thiouridine biosynthesis"/>
    <property type="evidence" value="ECO:0007669"/>
    <property type="project" value="TreeGrafter"/>
</dbReference>
<dbReference type="CDD" id="cd01712">
    <property type="entry name" value="PPase_ThiI"/>
    <property type="match status" value="1"/>
</dbReference>
<dbReference type="CDD" id="cd00158">
    <property type="entry name" value="RHOD"/>
    <property type="match status" value="1"/>
</dbReference>
<dbReference type="CDD" id="cd11716">
    <property type="entry name" value="THUMP_ThiI"/>
    <property type="match status" value="1"/>
</dbReference>
<dbReference type="FunFam" id="3.30.2130.30:FF:000002">
    <property type="entry name" value="tRNA sulfurtransferase"/>
    <property type="match status" value="1"/>
</dbReference>
<dbReference type="FunFam" id="3.40.250.10:FF:000003">
    <property type="entry name" value="tRNA sulfurtransferase"/>
    <property type="match status" value="1"/>
</dbReference>
<dbReference type="FunFam" id="3.40.50.620:FF:000029">
    <property type="entry name" value="tRNA sulfurtransferase"/>
    <property type="match status" value="1"/>
</dbReference>
<dbReference type="Gene3D" id="3.30.2130.30">
    <property type="match status" value="1"/>
</dbReference>
<dbReference type="Gene3D" id="3.40.50.620">
    <property type="entry name" value="HUPs"/>
    <property type="match status" value="1"/>
</dbReference>
<dbReference type="Gene3D" id="3.40.250.10">
    <property type="entry name" value="Rhodanese-like domain"/>
    <property type="match status" value="1"/>
</dbReference>
<dbReference type="HAMAP" id="MF_00021">
    <property type="entry name" value="ThiI"/>
    <property type="match status" value="1"/>
</dbReference>
<dbReference type="InterPro" id="IPR001763">
    <property type="entry name" value="Rhodanese-like_dom"/>
</dbReference>
<dbReference type="InterPro" id="IPR036873">
    <property type="entry name" value="Rhodanese-like_dom_sf"/>
</dbReference>
<dbReference type="InterPro" id="IPR014729">
    <property type="entry name" value="Rossmann-like_a/b/a_fold"/>
</dbReference>
<dbReference type="InterPro" id="IPR020536">
    <property type="entry name" value="ThiI_AANH"/>
</dbReference>
<dbReference type="InterPro" id="IPR054173">
    <property type="entry name" value="ThiI_fer"/>
</dbReference>
<dbReference type="InterPro" id="IPR049961">
    <property type="entry name" value="ThiI_N"/>
</dbReference>
<dbReference type="InterPro" id="IPR026340">
    <property type="entry name" value="THII_Thiazole_biosynth_dom"/>
</dbReference>
<dbReference type="InterPro" id="IPR004114">
    <property type="entry name" value="THUMP_dom"/>
</dbReference>
<dbReference type="InterPro" id="IPR049962">
    <property type="entry name" value="THUMP_ThiI"/>
</dbReference>
<dbReference type="InterPro" id="IPR003720">
    <property type="entry name" value="tRNA_STrfase"/>
</dbReference>
<dbReference type="InterPro" id="IPR050102">
    <property type="entry name" value="tRNA_sulfurtransferase_ThiI"/>
</dbReference>
<dbReference type="NCBIfam" id="TIGR04271">
    <property type="entry name" value="ThiI_C_thiazole"/>
    <property type="match status" value="1"/>
</dbReference>
<dbReference type="NCBIfam" id="TIGR00342">
    <property type="entry name" value="tRNA uracil 4-sulfurtransferase ThiI"/>
    <property type="match status" value="1"/>
</dbReference>
<dbReference type="PANTHER" id="PTHR43209">
    <property type="entry name" value="TRNA SULFURTRANSFERASE"/>
    <property type="match status" value="1"/>
</dbReference>
<dbReference type="PANTHER" id="PTHR43209:SF1">
    <property type="entry name" value="TRNA SULFURTRANSFERASE"/>
    <property type="match status" value="1"/>
</dbReference>
<dbReference type="Pfam" id="PF00581">
    <property type="entry name" value="Rhodanese"/>
    <property type="match status" value="1"/>
</dbReference>
<dbReference type="Pfam" id="PF02568">
    <property type="entry name" value="ThiI"/>
    <property type="match status" value="1"/>
</dbReference>
<dbReference type="Pfam" id="PF22025">
    <property type="entry name" value="ThiI_fer"/>
    <property type="match status" value="1"/>
</dbReference>
<dbReference type="Pfam" id="PF02926">
    <property type="entry name" value="THUMP"/>
    <property type="match status" value="1"/>
</dbReference>
<dbReference type="SMART" id="SM00981">
    <property type="entry name" value="THUMP"/>
    <property type="match status" value="1"/>
</dbReference>
<dbReference type="SUPFAM" id="SSF52402">
    <property type="entry name" value="Adenine nucleotide alpha hydrolases-like"/>
    <property type="match status" value="1"/>
</dbReference>
<dbReference type="SUPFAM" id="SSF52821">
    <property type="entry name" value="Rhodanese/Cell cycle control phosphatase"/>
    <property type="match status" value="1"/>
</dbReference>
<dbReference type="SUPFAM" id="SSF143437">
    <property type="entry name" value="THUMP domain-like"/>
    <property type="match status" value="1"/>
</dbReference>
<dbReference type="PROSITE" id="PS50206">
    <property type="entry name" value="RHODANESE_3"/>
    <property type="match status" value="1"/>
</dbReference>
<dbReference type="PROSITE" id="PS51165">
    <property type="entry name" value="THUMP"/>
    <property type="match status" value="1"/>
</dbReference>
<gene>
    <name evidence="1" type="primary">thiI</name>
    <name type="ordered locus">Spro_1081</name>
</gene>
<comment type="function">
    <text evidence="1">Catalyzes the ATP-dependent transfer of a sulfur to tRNA to produce 4-thiouridine in position 8 of tRNAs, which functions as a near-UV photosensor. Also catalyzes the transfer of sulfur to the sulfur carrier protein ThiS, forming ThiS-thiocarboxylate. This is a step in the synthesis of thiazole, in the thiamine biosynthesis pathway. The sulfur is donated as persulfide by IscS.</text>
</comment>
<comment type="catalytic activity">
    <reaction evidence="1">
        <text>[ThiI sulfur-carrier protein]-S-sulfanyl-L-cysteine + a uridine in tRNA + 2 reduced [2Fe-2S]-[ferredoxin] + ATP + H(+) = [ThiI sulfur-carrier protein]-L-cysteine + a 4-thiouridine in tRNA + 2 oxidized [2Fe-2S]-[ferredoxin] + AMP + diphosphate</text>
        <dbReference type="Rhea" id="RHEA:24176"/>
        <dbReference type="Rhea" id="RHEA-COMP:10000"/>
        <dbReference type="Rhea" id="RHEA-COMP:10001"/>
        <dbReference type="Rhea" id="RHEA-COMP:13337"/>
        <dbReference type="Rhea" id="RHEA-COMP:13338"/>
        <dbReference type="Rhea" id="RHEA-COMP:13339"/>
        <dbReference type="Rhea" id="RHEA-COMP:13340"/>
        <dbReference type="ChEBI" id="CHEBI:15378"/>
        <dbReference type="ChEBI" id="CHEBI:29950"/>
        <dbReference type="ChEBI" id="CHEBI:30616"/>
        <dbReference type="ChEBI" id="CHEBI:33019"/>
        <dbReference type="ChEBI" id="CHEBI:33737"/>
        <dbReference type="ChEBI" id="CHEBI:33738"/>
        <dbReference type="ChEBI" id="CHEBI:61963"/>
        <dbReference type="ChEBI" id="CHEBI:65315"/>
        <dbReference type="ChEBI" id="CHEBI:136798"/>
        <dbReference type="ChEBI" id="CHEBI:456215"/>
        <dbReference type="EC" id="2.8.1.4"/>
    </reaction>
</comment>
<comment type="catalytic activity">
    <reaction evidence="1">
        <text>[ThiS sulfur-carrier protein]-C-terminal Gly-Gly-AMP + S-sulfanyl-L-cysteinyl-[cysteine desulfurase] + AH2 = [ThiS sulfur-carrier protein]-C-terminal-Gly-aminoethanethioate + L-cysteinyl-[cysteine desulfurase] + A + AMP + 2 H(+)</text>
        <dbReference type="Rhea" id="RHEA:43340"/>
        <dbReference type="Rhea" id="RHEA-COMP:12157"/>
        <dbReference type="Rhea" id="RHEA-COMP:12158"/>
        <dbReference type="Rhea" id="RHEA-COMP:12910"/>
        <dbReference type="Rhea" id="RHEA-COMP:19908"/>
        <dbReference type="ChEBI" id="CHEBI:13193"/>
        <dbReference type="ChEBI" id="CHEBI:15378"/>
        <dbReference type="ChEBI" id="CHEBI:17499"/>
        <dbReference type="ChEBI" id="CHEBI:29950"/>
        <dbReference type="ChEBI" id="CHEBI:61963"/>
        <dbReference type="ChEBI" id="CHEBI:90618"/>
        <dbReference type="ChEBI" id="CHEBI:232372"/>
        <dbReference type="ChEBI" id="CHEBI:456215"/>
    </reaction>
</comment>
<comment type="pathway">
    <text evidence="1">Cofactor biosynthesis; thiamine diphosphate biosynthesis.</text>
</comment>
<comment type="subcellular location">
    <subcellularLocation>
        <location evidence="1">Cytoplasm</location>
    </subcellularLocation>
</comment>
<comment type="similarity">
    <text evidence="1">Belongs to the ThiI family.</text>
</comment>
<feature type="chain" id="PRO_1000074261" description="tRNA sulfurtransferase">
    <location>
        <begin position="1"/>
        <end position="482"/>
    </location>
</feature>
<feature type="domain" description="THUMP" evidence="1">
    <location>
        <begin position="61"/>
        <end position="165"/>
    </location>
</feature>
<feature type="domain" description="Rhodanese" evidence="1">
    <location>
        <begin position="404"/>
        <end position="482"/>
    </location>
</feature>
<feature type="active site" description="Cysteine persulfide intermediate" evidence="1">
    <location>
        <position position="456"/>
    </location>
</feature>
<feature type="binding site" evidence="1">
    <location>
        <begin position="183"/>
        <end position="184"/>
    </location>
    <ligand>
        <name>ATP</name>
        <dbReference type="ChEBI" id="CHEBI:30616"/>
    </ligand>
</feature>
<feature type="binding site" evidence="1">
    <location>
        <position position="265"/>
    </location>
    <ligand>
        <name>ATP</name>
        <dbReference type="ChEBI" id="CHEBI:30616"/>
    </ligand>
</feature>
<feature type="binding site" evidence="1">
    <location>
        <position position="287"/>
    </location>
    <ligand>
        <name>ATP</name>
        <dbReference type="ChEBI" id="CHEBI:30616"/>
    </ligand>
</feature>
<feature type="binding site" evidence="1">
    <location>
        <position position="296"/>
    </location>
    <ligand>
        <name>ATP</name>
        <dbReference type="ChEBI" id="CHEBI:30616"/>
    </ligand>
</feature>
<feature type="disulfide bond" description="Redox-active" evidence="1">
    <location>
        <begin position="344"/>
        <end position="456"/>
    </location>
</feature>
<accession>A8GAP5</accession>
<proteinExistence type="inferred from homology"/>
<name>THII_SERP5</name>
<evidence type="ECO:0000255" key="1">
    <source>
        <dbReference type="HAMAP-Rule" id="MF_00021"/>
    </source>
</evidence>
<organism>
    <name type="scientific">Serratia proteamaculans (strain 568)</name>
    <dbReference type="NCBI Taxonomy" id="399741"/>
    <lineage>
        <taxon>Bacteria</taxon>
        <taxon>Pseudomonadati</taxon>
        <taxon>Pseudomonadota</taxon>
        <taxon>Gammaproteobacteria</taxon>
        <taxon>Enterobacterales</taxon>
        <taxon>Yersiniaceae</taxon>
        <taxon>Serratia</taxon>
    </lineage>
</organism>
<keyword id="KW-0067">ATP-binding</keyword>
<keyword id="KW-0963">Cytoplasm</keyword>
<keyword id="KW-1015">Disulfide bond</keyword>
<keyword id="KW-0547">Nucleotide-binding</keyword>
<keyword id="KW-0676">Redox-active center</keyword>
<keyword id="KW-0694">RNA-binding</keyword>
<keyword id="KW-0784">Thiamine biosynthesis</keyword>
<keyword id="KW-0808">Transferase</keyword>
<keyword id="KW-0820">tRNA-binding</keyword>
<reference key="1">
    <citation type="submission" date="2007-09" db="EMBL/GenBank/DDBJ databases">
        <title>Complete sequence of chromosome of Serratia proteamaculans 568.</title>
        <authorList>
            <consortium name="US DOE Joint Genome Institute"/>
            <person name="Copeland A."/>
            <person name="Lucas S."/>
            <person name="Lapidus A."/>
            <person name="Barry K."/>
            <person name="Glavina del Rio T."/>
            <person name="Dalin E."/>
            <person name="Tice H."/>
            <person name="Pitluck S."/>
            <person name="Chain P."/>
            <person name="Malfatti S."/>
            <person name="Shin M."/>
            <person name="Vergez L."/>
            <person name="Schmutz J."/>
            <person name="Larimer F."/>
            <person name="Land M."/>
            <person name="Hauser L."/>
            <person name="Kyrpides N."/>
            <person name="Kim E."/>
            <person name="Taghavi S."/>
            <person name="Newman L."/>
            <person name="Vangronsveld J."/>
            <person name="van der Lelie D."/>
            <person name="Richardson P."/>
        </authorList>
    </citation>
    <scope>NUCLEOTIDE SEQUENCE [LARGE SCALE GENOMIC DNA]</scope>
    <source>
        <strain>568</strain>
    </source>
</reference>
<sequence>MKFIIKLFPEITIKSQSVRLRFIKILSTSIRNVLKQYDETLAVVRHWDHIEVRAKDENQRPVIADALTRIPGIHHILEVEDRDYTDIHHIFEQTLEAYREQLEGKTFCVRVKRRGKQDFNSQDVERYVGGGLNQHIESARVKLSHPQVTVNLEIENDKLMLVKARREGIGGYPVGTQEDVLSLISGGFDSGVSSYMLMRRGCRVHYCFFNLGGAAHEIGVRQVAHYLWNRFASSHKVRFIAIDFEPVVGEILEKVEDGQMGVVLKRMMVRAASQIAERYGVQALVTGEALGQVSSQTLTNLRLIDNASDTLILRPLISHDKEHIIKVAREIGTEDFAKTMPEYCGVISKSPTVKAIKAKIEEEEGHFDFSILDRVVSEAKNVDIRTIAEQTQEQVTEVETVAEFDADQVILDIRSNDEQEDKPLKLDQVEVKPLPFYKLSTQFGDLDQSKTYLLYCERGVMSRLQALYLLEQGFTNVKVYRP</sequence>
<protein>
    <recommendedName>
        <fullName evidence="1">tRNA sulfurtransferase</fullName>
        <ecNumber evidence="1">2.8.1.4</ecNumber>
    </recommendedName>
    <alternativeName>
        <fullName evidence="1">Sulfur carrier protein ThiS sulfurtransferase</fullName>
    </alternativeName>
    <alternativeName>
        <fullName evidence="1">Thiamine biosynthesis protein ThiI</fullName>
    </alternativeName>
    <alternativeName>
        <fullName evidence="1">tRNA 4-thiouridine synthase</fullName>
    </alternativeName>
</protein>